<feature type="chain" id="PRO_1000146158" description="Large ribosomal subunit protein bL35">
    <location>
        <begin position="1"/>
        <end position="66"/>
    </location>
</feature>
<feature type="region of interest" description="Disordered" evidence="2">
    <location>
        <begin position="1"/>
        <end position="49"/>
    </location>
</feature>
<feature type="compositionally biased region" description="Basic residues" evidence="2">
    <location>
        <begin position="1"/>
        <end position="26"/>
    </location>
</feature>
<name>RL35_STACT</name>
<evidence type="ECO:0000255" key="1">
    <source>
        <dbReference type="HAMAP-Rule" id="MF_00514"/>
    </source>
</evidence>
<evidence type="ECO:0000256" key="2">
    <source>
        <dbReference type="SAM" id="MobiDB-lite"/>
    </source>
</evidence>
<evidence type="ECO:0000305" key="3"/>
<organism>
    <name type="scientific">Staphylococcus carnosus (strain TM300)</name>
    <dbReference type="NCBI Taxonomy" id="396513"/>
    <lineage>
        <taxon>Bacteria</taxon>
        <taxon>Bacillati</taxon>
        <taxon>Bacillota</taxon>
        <taxon>Bacilli</taxon>
        <taxon>Bacillales</taxon>
        <taxon>Staphylococcaceae</taxon>
        <taxon>Staphylococcus</taxon>
    </lineage>
</organism>
<proteinExistence type="inferred from homology"/>
<reference key="1">
    <citation type="journal article" date="2009" name="Appl. Environ. Microbiol.">
        <title>Genome analysis of the meat starter culture bacterium Staphylococcus carnosus TM300.</title>
        <authorList>
            <person name="Rosenstein R."/>
            <person name="Nerz C."/>
            <person name="Biswas L."/>
            <person name="Resch A."/>
            <person name="Raddatz G."/>
            <person name="Schuster S.C."/>
            <person name="Goetz F."/>
        </authorList>
    </citation>
    <scope>NUCLEOTIDE SEQUENCE [LARGE SCALE GENOMIC DNA]</scope>
    <source>
        <strain>TM300</strain>
    </source>
</reference>
<sequence length="66" mass="7628">MPKMKTHRGAAKRVKRTASGKLKRSRAFTSHLFANKSTKQKRKLRKASLVSKSDMKRVKQLLAYKK</sequence>
<dbReference type="EMBL" id="AM295250">
    <property type="protein sequence ID" value="CAL28191.1"/>
    <property type="molecule type" value="Genomic_DNA"/>
</dbReference>
<dbReference type="RefSeq" id="WP_015900531.1">
    <property type="nucleotide sequence ID" value="NC_012121.1"/>
</dbReference>
<dbReference type="SMR" id="B9DNC5"/>
<dbReference type="GeneID" id="93793709"/>
<dbReference type="KEGG" id="sca:SCA_1285"/>
<dbReference type="eggNOG" id="COG0291">
    <property type="taxonomic scope" value="Bacteria"/>
</dbReference>
<dbReference type="HOGENOM" id="CLU_169643_3_0_9"/>
<dbReference type="OrthoDB" id="47476at2"/>
<dbReference type="BioCyc" id="SCAR396513:SCA_RS06410-MONOMER"/>
<dbReference type="Proteomes" id="UP000000444">
    <property type="component" value="Chromosome"/>
</dbReference>
<dbReference type="GO" id="GO:0022625">
    <property type="term" value="C:cytosolic large ribosomal subunit"/>
    <property type="evidence" value="ECO:0007669"/>
    <property type="project" value="TreeGrafter"/>
</dbReference>
<dbReference type="GO" id="GO:0003735">
    <property type="term" value="F:structural constituent of ribosome"/>
    <property type="evidence" value="ECO:0007669"/>
    <property type="project" value="InterPro"/>
</dbReference>
<dbReference type="GO" id="GO:0006412">
    <property type="term" value="P:translation"/>
    <property type="evidence" value="ECO:0007669"/>
    <property type="project" value="UniProtKB-UniRule"/>
</dbReference>
<dbReference type="FunFam" id="4.10.410.60:FF:000001">
    <property type="entry name" value="50S ribosomal protein L35"/>
    <property type="match status" value="1"/>
</dbReference>
<dbReference type="Gene3D" id="4.10.410.60">
    <property type="match status" value="1"/>
</dbReference>
<dbReference type="HAMAP" id="MF_00514">
    <property type="entry name" value="Ribosomal_bL35"/>
    <property type="match status" value="1"/>
</dbReference>
<dbReference type="InterPro" id="IPR001706">
    <property type="entry name" value="Ribosomal_bL35"/>
</dbReference>
<dbReference type="InterPro" id="IPR021137">
    <property type="entry name" value="Ribosomal_bL35-like"/>
</dbReference>
<dbReference type="InterPro" id="IPR018265">
    <property type="entry name" value="Ribosomal_bL35_CS"/>
</dbReference>
<dbReference type="InterPro" id="IPR037229">
    <property type="entry name" value="Ribosomal_bL35_sf"/>
</dbReference>
<dbReference type="NCBIfam" id="TIGR00001">
    <property type="entry name" value="rpmI_bact"/>
    <property type="match status" value="1"/>
</dbReference>
<dbReference type="PANTHER" id="PTHR33343">
    <property type="entry name" value="54S RIBOSOMAL PROTEIN BL35M"/>
    <property type="match status" value="1"/>
</dbReference>
<dbReference type="PANTHER" id="PTHR33343:SF1">
    <property type="entry name" value="LARGE RIBOSOMAL SUBUNIT PROTEIN BL35M"/>
    <property type="match status" value="1"/>
</dbReference>
<dbReference type="Pfam" id="PF01632">
    <property type="entry name" value="Ribosomal_L35p"/>
    <property type="match status" value="1"/>
</dbReference>
<dbReference type="PRINTS" id="PR00064">
    <property type="entry name" value="RIBOSOMALL35"/>
</dbReference>
<dbReference type="SUPFAM" id="SSF143034">
    <property type="entry name" value="L35p-like"/>
    <property type="match status" value="1"/>
</dbReference>
<dbReference type="PROSITE" id="PS00936">
    <property type="entry name" value="RIBOSOMAL_L35"/>
    <property type="match status" value="1"/>
</dbReference>
<protein>
    <recommendedName>
        <fullName evidence="1">Large ribosomal subunit protein bL35</fullName>
    </recommendedName>
    <alternativeName>
        <fullName evidence="3">50S ribosomal protein L35</fullName>
    </alternativeName>
</protein>
<gene>
    <name evidence="1" type="primary">rpmI</name>
    <name type="ordered locus">Sca_1285</name>
</gene>
<keyword id="KW-1185">Reference proteome</keyword>
<keyword id="KW-0687">Ribonucleoprotein</keyword>
<keyword id="KW-0689">Ribosomal protein</keyword>
<comment type="similarity">
    <text evidence="1">Belongs to the bacterial ribosomal protein bL35 family.</text>
</comment>
<accession>B9DNC5</accession>